<evidence type="ECO:0000250" key="1"/>
<evidence type="ECO:0000250" key="2">
    <source>
        <dbReference type="UniProtKB" id="P12785"/>
    </source>
</evidence>
<evidence type="ECO:0000250" key="3">
    <source>
        <dbReference type="UniProtKB" id="P49327"/>
    </source>
</evidence>
<evidence type="ECO:0000255" key="4">
    <source>
        <dbReference type="PROSITE-ProRule" id="PRU00258"/>
    </source>
</evidence>
<evidence type="ECO:0000269" key="5">
    <source>
    </source>
</evidence>
<accession>P07855</accession>
<organism>
    <name type="scientific">Oryctolagus cuniculus</name>
    <name type="common">Rabbit</name>
    <dbReference type="NCBI Taxonomy" id="9986"/>
    <lineage>
        <taxon>Eukaryota</taxon>
        <taxon>Metazoa</taxon>
        <taxon>Chordata</taxon>
        <taxon>Craniata</taxon>
        <taxon>Vertebrata</taxon>
        <taxon>Euteleostomi</taxon>
        <taxon>Mammalia</taxon>
        <taxon>Eutheria</taxon>
        <taxon>Euarchontoglires</taxon>
        <taxon>Glires</taxon>
        <taxon>Lagomorpha</taxon>
        <taxon>Leporidae</taxon>
        <taxon>Oryctolagus</taxon>
    </lineage>
</organism>
<dbReference type="EC" id="2.3.1.85"/>
<dbReference type="PIR" id="S07221">
    <property type="entry name" value="S07221"/>
</dbReference>
<dbReference type="SMR" id="P07855"/>
<dbReference type="InParanoid" id="P07855"/>
<dbReference type="Proteomes" id="UP000001811">
    <property type="component" value="Unplaced"/>
</dbReference>
<dbReference type="GO" id="GO:0005737">
    <property type="term" value="C:cytoplasm"/>
    <property type="evidence" value="ECO:0000250"/>
    <property type="project" value="UniProtKB"/>
</dbReference>
<dbReference type="GO" id="GO:0042470">
    <property type="term" value="C:melanosome"/>
    <property type="evidence" value="ECO:0007669"/>
    <property type="project" value="UniProtKB-SubCell"/>
</dbReference>
<dbReference type="GO" id="GO:0004312">
    <property type="term" value="F:fatty acid synthase activity"/>
    <property type="evidence" value="ECO:0007669"/>
    <property type="project" value="UniProtKB-EC"/>
</dbReference>
<dbReference type="GO" id="GO:0031177">
    <property type="term" value="F:phosphopantetheine binding"/>
    <property type="evidence" value="ECO:0007669"/>
    <property type="project" value="InterPro"/>
</dbReference>
<dbReference type="GO" id="GO:0006633">
    <property type="term" value="P:fatty acid biosynthetic process"/>
    <property type="evidence" value="ECO:0007669"/>
    <property type="project" value="UniProtKB-KW"/>
</dbReference>
<dbReference type="FunFam" id="1.10.1200.10:FF:000013">
    <property type="entry name" value="Fatty acid synthase"/>
    <property type="match status" value="1"/>
</dbReference>
<dbReference type="Gene3D" id="1.10.1200.10">
    <property type="entry name" value="ACP-like"/>
    <property type="match status" value="1"/>
</dbReference>
<dbReference type="InterPro" id="IPR036736">
    <property type="entry name" value="ACP-like_sf"/>
</dbReference>
<dbReference type="InterPro" id="IPR020806">
    <property type="entry name" value="PKS_PP-bd"/>
</dbReference>
<dbReference type="InterPro" id="IPR009081">
    <property type="entry name" value="PP-bd_ACP"/>
</dbReference>
<dbReference type="InterPro" id="IPR006162">
    <property type="entry name" value="Ppantetheine_attach_site"/>
</dbReference>
<dbReference type="Pfam" id="PF00550">
    <property type="entry name" value="PP-binding"/>
    <property type="match status" value="1"/>
</dbReference>
<dbReference type="SMART" id="SM00823">
    <property type="entry name" value="PKS_PP"/>
    <property type="match status" value="1"/>
</dbReference>
<dbReference type="SUPFAM" id="SSF47336">
    <property type="entry name" value="ACP-like"/>
    <property type="match status" value="1"/>
</dbReference>
<dbReference type="PROSITE" id="PS50075">
    <property type="entry name" value="CARRIER"/>
    <property type="match status" value="1"/>
</dbReference>
<dbReference type="PROSITE" id="PS00012">
    <property type="entry name" value="PHOSPHOPANTETHEINE"/>
    <property type="match status" value="1"/>
</dbReference>
<sequence>AEGEGQRDLLKAVAHILGIRDLAGINLDSSLADLGLDSLMGVEVRQTLEREHDLVLSMREVRQL</sequence>
<feature type="chain" id="PRO_0000180278" description="Fatty acid synthase">
    <location>
        <begin position="1" status="less than"/>
        <end position="64" status="greater than"/>
    </location>
</feature>
<feature type="domain" description="Carrier" evidence="4">
    <location>
        <begin position="1"/>
        <end position="64"/>
    </location>
</feature>
<feature type="modified residue" description="O-(pantetheine 4'-phosphoryl)serine; alternate" evidence="4 5">
    <location>
        <position position="38"/>
    </location>
</feature>
<feature type="modified residue" description="Phosphoserine; alternate" evidence="2">
    <location>
        <position position="38"/>
    </location>
</feature>
<feature type="non-terminal residue">
    <location>
        <position position="1"/>
    </location>
</feature>
<feature type="non-terminal residue">
    <location>
        <position position="64"/>
    </location>
</feature>
<reference key="1">
    <citation type="journal article" date="1983" name="Eur. J. Biochem.">
        <title>The multifunctional polypeptide chain of rabbit mammary fatty acid synthase contains a domain homologous with the acyl carrier protein of Escherichia coli.</title>
        <authorList>
            <person name="McCarthy A.D."/>
            <person name="Aitken A."/>
            <person name="Hardie D.G."/>
        </authorList>
    </citation>
    <scope>PROTEIN SEQUENCE</scope>
    <scope>PHOSPHOPANTETHEINYLATION AT SER-38</scope>
</reference>
<gene>
    <name type="primary">FASN</name>
</gene>
<protein>
    <recommendedName>
        <fullName>Fatty acid synthase</fullName>
        <ecNumber>2.3.1.85</ecNumber>
    </recommendedName>
</protein>
<keyword id="KW-0963">Cytoplasm</keyword>
<keyword id="KW-0903">Direct protein sequencing</keyword>
<keyword id="KW-0275">Fatty acid biosynthesis</keyword>
<keyword id="KW-0276">Fatty acid metabolism</keyword>
<keyword id="KW-0444">Lipid biosynthesis</keyword>
<keyword id="KW-0443">Lipid metabolism</keyword>
<keyword id="KW-0511">Multifunctional enzyme</keyword>
<keyword id="KW-0520">NAD</keyword>
<keyword id="KW-0521">NADP</keyword>
<keyword id="KW-0596">Phosphopantetheine</keyword>
<keyword id="KW-0597">Phosphoprotein</keyword>
<keyword id="KW-1185">Reference proteome</keyword>
<keyword id="KW-0808">Transferase</keyword>
<name>FAS_RABIT</name>
<proteinExistence type="evidence at protein level"/>
<comment type="function">
    <text>Fatty acid synthetase catalyzes the formation of long-chain fatty acids from acetyl-CoA, malonyl-CoA and NADPH. This multifunctional protein has 7 catalytic activities as an acyl carrier protein.</text>
</comment>
<comment type="catalytic activity">
    <reaction>
        <text>acetyl-CoA + n malonyl-CoA + 2n NADPH + 2n H(+) = a long-chain fatty acid + (n+1) CoA + n CO2 + 2n NADP(+).</text>
        <dbReference type="EC" id="2.3.1.85"/>
    </reaction>
</comment>
<comment type="subunit">
    <text evidence="2 3">Homodimer which is arranged in a head to tail fashion (By similarity). Interacts with CEACAM1; this interaction is insulin and phosphorylation-dependent; reduces fatty-acid synthase activity (By similarity).</text>
</comment>
<comment type="subcellular location">
    <subcellularLocation>
        <location evidence="1">Cytoplasm</location>
    </subcellularLocation>
    <subcellularLocation>
        <location evidence="1">Melanosome</location>
    </subcellularLocation>
</comment>